<comment type="subcellular location">
    <subcellularLocation>
        <location>Membrane</location>
        <topology>Multi-pass membrane protein</topology>
    </subcellularLocation>
</comment>
<comment type="similarity">
    <text evidence="3">Belongs to the auxin efflux carrier (TC 2.A.69) family.</text>
</comment>
<organism>
    <name type="scientific">Saccharomyces cerevisiae (strain ATCC 204508 / S288c)</name>
    <name type="common">Baker's yeast</name>
    <dbReference type="NCBI Taxonomy" id="559292"/>
    <lineage>
        <taxon>Eukaryota</taxon>
        <taxon>Fungi</taxon>
        <taxon>Dikarya</taxon>
        <taxon>Ascomycota</taxon>
        <taxon>Saccharomycotina</taxon>
        <taxon>Saccharomycetes</taxon>
        <taxon>Saccharomycetales</taxon>
        <taxon>Saccharomycetaceae</taxon>
        <taxon>Saccharomyces</taxon>
    </lineage>
</organism>
<feature type="chain" id="PRO_0000123807" description="Uncharacterized transporter YNL095C">
    <location>
        <begin position="1"/>
        <end position="642"/>
    </location>
</feature>
<feature type="topological domain" description="Cytoplasmic" evidence="1">
    <location>
        <begin position="1"/>
        <end position="15"/>
    </location>
</feature>
<feature type="transmembrane region" description="Helical" evidence="1">
    <location>
        <begin position="16"/>
        <end position="36"/>
    </location>
</feature>
<feature type="topological domain" description="Extracellular" evidence="1">
    <location>
        <begin position="37"/>
        <end position="42"/>
    </location>
</feature>
<feature type="transmembrane region" description="Helical" evidence="1">
    <location>
        <begin position="43"/>
        <end position="63"/>
    </location>
</feature>
<feature type="topological domain" description="Cytoplasmic" evidence="1">
    <location>
        <begin position="64"/>
        <end position="73"/>
    </location>
</feature>
<feature type="transmembrane region" description="Helical" evidence="1">
    <location>
        <begin position="74"/>
        <end position="94"/>
    </location>
</feature>
<feature type="topological domain" description="Extracellular" evidence="1">
    <location>
        <begin position="95"/>
        <end position="104"/>
    </location>
</feature>
<feature type="transmembrane region" description="Helical" evidence="1">
    <location>
        <begin position="105"/>
        <end position="125"/>
    </location>
</feature>
<feature type="topological domain" description="Cytoplasmic" evidence="1">
    <location>
        <begin position="126"/>
        <end position="142"/>
    </location>
</feature>
<feature type="transmembrane region" description="Helical" evidence="1">
    <location>
        <begin position="143"/>
        <end position="163"/>
    </location>
</feature>
<feature type="topological domain" description="Extracellular" evidence="1">
    <location>
        <begin position="164"/>
        <end position="460"/>
    </location>
</feature>
<feature type="transmembrane region" description="Helical" evidence="1">
    <location>
        <begin position="461"/>
        <end position="481"/>
    </location>
</feature>
<feature type="topological domain" description="Cytoplasmic" evidence="1">
    <location>
        <begin position="482"/>
        <end position="499"/>
    </location>
</feature>
<feature type="transmembrane region" description="Helical" evidence="1">
    <location>
        <begin position="500"/>
        <end position="520"/>
    </location>
</feature>
<feature type="topological domain" description="Extracellular" evidence="1">
    <location>
        <begin position="521"/>
        <end position="538"/>
    </location>
</feature>
<feature type="transmembrane region" description="Helical" evidence="1">
    <location>
        <begin position="539"/>
        <end position="559"/>
    </location>
</feature>
<feature type="topological domain" description="Cytoplasmic" evidence="1">
    <location>
        <begin position="560"/>
        <end position="574"/>
    </location>
</feature>
<feature type="transmembrane region" description="Helical" evidence="1">
    <location>
        <begin position="575"/>
        <end position="595"/>
    </location>
</feature>
<feature type="topological domain" description="Extracellular" evidence="1">
    <location>
        <begin position="596"/>
        <end position="614"/>
    </location>
</feature>
<feature type="transmembrane region" description="Helical" evidence="1">
    <location>
        <begin position="615"/>
        <end position="635"/>
    </location>
</feature>
<feature type="topological domain" description="Cytoplasmic" evidence="1">
    <location>
        <begin position="636"/>
        <end position="642"/>
    </location>
</feature>
<feature type="region of interest" description="Disordered" evidence="2">
    <location>
        <begin position="183"/>
        <end position="206"/>
    </location>
</feature>
<feature type="region of interest" description="Disordered" evidence="2">
    <location>
        <begin position="227"/>
        <end position="324"/>
    </location>
</feature>
<feature type="compositionally biased region" description="Polar residues" evidence="2">
    <location>
        <begin position="240"/>
        <end position="260"/>
    </location>
</feature>
<feature type="compositionally biased region" description="Polar residues" evidence="2">
    <location>
        <begin position="272"/>
        <end position="312"/>
    </location>
</feature>
<keyword id="KW-0472">Membrane</keyword>
<keyword id="KW-1185">Reference proteome</keyword>
<keyword id="KW-0812">Transmembrane</keyword>
<keyword id="KW-1133">Transmembrane helix</keyword>
<keyword id="KW-0813">Transport</keyword>
<dbReference type="EMBL" id="X85811">
    <property type="protein sequence ID" value="CAA59822.1"/>
    <property type="molecule type" value="Genomic_DNA"/>
</dbReference>
<dbReference type="EMBL" id="Z71371">
    <property type="protein sequence ID" value="CAA95971.1"/>
    <property type="molecule type" value="Genomic_DNA"/>
</dbReference>
<dbReference type="EMBL" id="BK006947">
    <property type="protein sequence ID" value="DAA10451.1"/>
    <property type="molecule type" value="Genomic_DNA"/>
</dbReference>
<dbReference type="PIR" id="S52730">
    <property type="entry name" value="S52730"/>
</dbReference>
<dbReference type="RefSeq" id="NP_014304.1">
    <property type="nucleotide sequence ID" value="NM_001182933.1"/>
</dbReference>
<dbReference type="BioGRID" id="35729">
    <property type="interactions" value="53"/>
</dbReference>
<dbReference type="DIP" id="DIP-4349N"/>
<dbReference type="FunCoup" id="P53932">
    <property type="interactions" value="79"/>
</dbReference>
<dbReference type="IntAct" id="P53932">
    <property type="interactions" value="1"/>
</dbReference>
<dbReference type="STRING" id="4932.YNL095C"/>
<dbReference type="iPTMnet" id="P53932"/>
<dbReference type="PaxDb" id="4932-YNL095C"/>
<dbReference type="PeptideAtlas" id="P53932"/>
<dbReference type="EnsemblFungi" id="YNL095C_mRNA">
    <property type="protein sequence ID" value="YNL095C"/>
    <property type="gene ID" value="YNL095C"/>
</dbReference>
<dbReference type="GeneID" id="855629"/>
<dbReference type="KEGG" id="sce:YNL095C"/>
<dbReference type="AGR" id="SGD:S000005039"/>
<dbReference type="SGD" id="S000005039">
    <property type="gene designation" value="YNL095C"/>
</dbReference>
<dbReference type="VEuPathDB" id="FungiDB:YNL095C"/>
<dbReference type="eggNOG" id="ENOG502QU6H">
    <property type="taxonomic scope" value="Eukaryota"/>
</dbReference>
<dbReference type="GeneTree" id="ENSGT00940000176363"/>
<dbReference type="HOGENOM" id="CLU_021924_0_0_1"/>
<dbReference type="InParanoid" id="P53932"/>
<dbReference type="OrthoDB" id="435607at2759"/>
<dbReference type="BioCyc" id="YEAST:G3O-33123-MONOMER"/>
<dbReference type="BioGRID-ORCS" id="855629">
    <property type="hits" value="0 hits in 10 CRISPR screens"/>
</dbReference>
<dbReference type="PRO" id="PR:P53932"/>
<dbReference type="Proteomes" id="UP000002311">
    <property type="component" value="Chromosome XIV"/>
</dbReference>
<dbReference type="RNAct" id="P53932">
    <property type="molecule type" value="protein"/>
</dbReference>
<dbReference type="GO" id="GO:0005783">
    <property type="term" value="C:endoplasmic reticulum"/>
    <property type="evidence" value="ECO:0007005"/>
    <property type="project" value="SGD"/>
</dbReference>
<dbReference type="GO" id="GO:0016020">
    <property type="term" value="C:membrane"/>
    <property type="evidence" value="ECO:0007669"/>
    <property type="project" value="UniProtKB-SubCell"/>
</dbReference>
<dbReference type="GO" id="GO:0055085">
    <property type="term" value="P:transmembrane transport"/>
    <property type="evidence" value="ECO:0007669"/>
    <property type="project" value="InterPro"/>
</dbReference>
<dbReference type="InterPro" id="IPR040254">
    <property type="entry name" value="Ecm3-like"/>
</dbReference>
<dbReference type="InterPro" id="IPR004776">
    <property type="entry name" value="Mem_transp_PIN-like"/>
</dbReference>
<dbReference type="PANTHER" id="PTHR31274">
    <property type="entry name" value="PROTEIN ECM3"/>
    <property type="match status" value="1"/>
</dbReference>
<dbReference type="PANTHER" id="PTHR31274:SF3">
    <property type="entry name" value="PROTEIN ECM3"/>
    <property type="match status" value="1"/>
</dbReference>
<dbReference type="Pfam" id="PF03547">
    <property type="entry name" value="Mem_trans"/>
    <property type="match status" value="1"/>
</dbReference>
<sequence length="642" mass="71196">MVHITLGQAIWVSVKPIIKIYLIIGVGFLMAKMGILTVEATRIISDIVLTVLLPSLSFNKIVANIEDKDIKSVGIICLSALLIFGSGFFFAYVVRLFLPVPKQWYGGILAGGMFPNISDLPIAYLQSMDQGLVFSEEEGNKGVANVIIFLTMFLICIFNLGGFRLIESDFEYNDDESAVRVSETTKTQPAVSANTTNTDTSERFFSNEQQLFNNKYTARDSLTEAIGTKGENADVPPISRRSTNSIAPLSLPDTSSNSKITKPVQVKARNTIACTQSEESQATRGSNPLDSQSSASTIHSYNTSESYESSIDTMRARRTASQPRAYNTTTLLEENCLDEKCPKNMSMAALEPIRSIDMRALPSQNIHHLIREYSNVDQYGHQRRNSSLRGADMNDVHSISSNSTLQTIKTANLTRILTSDATVSKKDIETSGESLPQWMRKFSLTPLLVFFLKNCLRPCSMAVIIALTVAFIPWVKALFVTTANTPHISQAPDNAPPLSFFMDFTGYVGAACVPFGLILLGATLGRLKIGNLYPGFWKAAVTLVILRQCVMPIFGVLWCDRLVKAGWVNWQDDRMLLFVIAISWNLPTMTTLIYFTASFTPPETTAPIQMECVSFFLMLQYPLMVVSLPFLVSYFLKVQMNL</sequence>
<name>YNJ5_YEAST</name>
<protein>
    <recommendedName>
        <fullName>Uncharacterized transporter YNL095C</fullName>
    </recommendedName>
</protein>
<accession>P53932</accession>
<accession>D6W185</accession>
<proteinExistence type="evidence at protein level"/>
<reference key="1">
    <citation type="journal article" date="1996" name="Yeast">
        <title>Sequence analysis of a 14.2 kb fragment of Saccharomyces cerevisiae chromosome XIV that includes the ypt53, tRNALeu and gsr m2 genes and four new open reading frames.</title>
        <authorList>
            <person name="Garcia-Cantalejo J.M."/>
            <person name="Boskovic J."/>
            <person name="Jimenez A."/>
        </authorList>
    </citation>
    <scope>NUCLEOTIDE SEQUENCE [GENOMIC DNA]</scope>
    <source>
        <strain>ATCC 96604 / S288c / FY1679</strain>
    </source>
</reference>
<reference key="2">
    <citation type="journal article" date="1997" name="Nature">
        <title>The nucleotide sequence of Saccharomyces cerevisiae chromosome XIV and its evolutionary implications.</title>
        <authorList>
            <person name="Philippsen P."/>
            <person name="Kleine K."/>
            <person name="Poehlmann R."/>
            <person name="Duesterhoeft A."/>
            <person name="Hamberg K."/>
            <person name="Hegemann J.H."/>
            <person name="Obermaier B."/>
            <person name="Urrestarazu L.A."/>
            <person name="Aert R."/>
            <person name="Albermann K."/>
            <person name="Altmann R."/>
            <person name="Andre B."/>
            <person name="Baladron V."/>
            <person name="Ballesta J.P.G."/>
            <person name="Becam A.-M."/>
            <person name="Beinhauer J.D."/>
            <person name="Boskovic J."/>
            <person name="Buitrago M.J."/>
            <person name="Bussereau F."/>
            <person name="Coster F."/>
            <person name="Crouzet M."/>
            <person name="D'Angelo M."/>
            <person name="Dal Pero F."/>
            <person name="De Antoni A."/>
            <person name="del Rey F."/>
            <person name="Doignon F."/>
            <person name="Domdey H."/>
            <person name="Dubois E."/>
            <person name="Fiedler T.A."/>
            <person name="Fleig U."/>
            <person name="Floeth M."/>
            <person name="Fritz C."/>
            <person name="Gaillardin C."/>
            <person name="Garcia-Cantalejo J.M."/>
            <person name="Glansdorff N."/>
            <person name="Goffeau A."/>
            <person name="Gueldener U."/>
            <person name="Herbert C.J."/>
            <person name="Heumann K."/>
            <person name="Heuss-Neitzel D."/>
            <person name="Hilbert H."/>
            <person name="Hinni K."/>
            <person name="Iraqui Houssaini I."/>
            <person name="Jacquet M."/>
            <person name="Jimenez A."/>
            <person name="Jonniaux J.-L."/>
            <person name="Karpfinger-Hartl L."/>
            <person name="Lanfranchi G."/>
            <person name="Lepingle A."/>
            <person name="Levesque H."/>
            <person name="Lyck R."/>
            <person name="Maftahi M."/>
            <person name="Mallet L."/>
            <person name="Maurer C.T.C."/>
            <person name="Messenguy F."/>
            <person name="Mewes H.-W."/>
            <person name="Moestl D."/>
            <person name="Nasr F."/>
            <person name="Nicaud J.-M."/>
            <person name="Niedenthal R.K."/>
            <person name="Pandolfo D."/>
            <person name="Pierard A."/>
            <person name="Piravandi E."/>
            <person name="Planta R.J."/>
            <person name="Pohl T.M."/>
            <person name="Purnelle B."/>
            <person name="Rebischung C."/>
            <person name="Remacha M.A."/>
            <person name="Revuelta J.L."/>
            <person name="Rinke M."/>
            <person name="Saiz J.E."/>
            <person name="Sartorello F."/>
            <person name="Scherens B."/>
            <person name="Sen-Gupta M."/>
            <person name="Soler-Mira A."/>
            <person name="Urbanus J.H.M."/>
            <person name="Valle G."/>
            <person name="Van Dyck L."/>
            <person name="Verhasselt P."/>
            <person name="Vierendeels F."/>
            <person name="Vissers S."/>
            <person name="Voet M."/>
            <person name="Volckaert G."/>
            <person name="Wach A."/>
            <person name="Wambutt R."/>
            <person name="Wedler H."/>
            <person name="Zollner A."/>
            <person name="Hani J."/>
        </authorList>
    </citation>
    <scope>NUCLEOTIDE SEQUENCE [LARGE SCALE GENOMIC DNA]</scope>
    <source>
        <strain>ATCC 204508 / S288c</strain>
    </source>
</reference>
<reference key="3">
    <citation type="journal article" date="2014" name="G3 (Bethesda)">
        <title>The reference genome sequence of Saccharomyces cerevisiae: Then and now.</title>
        <authorList>
            <person name="Engel S.R."/>
            <person name="Dietrich F.S."/>
            <person name="Fisk D.G."/>
            <person name="Binkley G."/>
            <person name="Balakrishnan R."/>
            <person name="Costanzo M.C."/>
            <person name="Dwight S.S."/>
            <person name="Hitz B.C."/>
            <person name="Karra K."/>
            <person name="Nash R.S."/>
            <person name="Weng S."/>
            <person name="Wong E.D."/>
            <person name="Lloyd P."/>
            <person name="Skrzypek M.S."/>
            <person name="Miyasato S.R."/>
            <person name="Simison M."/>
            <person name="Cherry J.M."/>
        </authorList>
    </citation>
    <scope>GENOME REANNOTATION</scope>
    <source>
        <strain>ATCC 204508 / S288c</strain>
    </source>
</reference>
<reference key="4">
    <citation type="journal article" date="2006" name="Proc. Natl. Acad. Sci. U.S.A.">
        <title>A global topology map of the Saccharomyces cerevisiae membrane proteome.</title>
        <authorList>
            <person name="Kim H."/>
            <person name="Melen K."/>
            <person name="Oesterberg M."/>
            <person name="von Heijne G."/>
        </authorList>
    </citation>
    <scope>TOPOLOGY [LARGE SCALE ANALYSIS]</scope>
    <source>
        <strain>ATCC 208353 / W303-1A</strain>
    </source>
</reference>
<evidence type="ECO:0000255" key="1"/>
<evidence type="ECO:0000256" key="2">
    <source>
        <dbReference type="SAM" id="MobiDB-lite"/>
    </source>
</evidence>
<evidence type="ECO:0000305" key="3"/>
<gene>
    <name type="ordered locus">YNL095C</name>
    <name type="ORF">N2215</name>
</gene>